<geneLocation type="chloroplast"/>
<proteinExistence type="inferred from homology"/>
<sequence>MLTLKLFVYTVVIFFVSLFIFGFLSNDPGRNPGREE</sequence>
<name>PSBI_CAPBU</name>
<protein>
    <recommendedName>
        <fullName evidence="1">Photosystem II reaction center protein I</fullName>
        <shortName evidence="1">PSII-I</shortName>
    </recommendedName>
    <alternativeName>
        <fullName evidence="1">PSII 4.8 kDa protein</fullName>
    </alternativeName>
</protein>
<accession>A4QKH6</accession>
<comment type="function">
    <text evidence="1">One of the components of the core complex of photosystem II (PSII), required for its stability and/or assembly. PSII is a light-driven water:plastoquinone oxidoreductase that uses light energy to abstract electrons from H(2)O, generating O(2) and a proton gradient subsequently used for ATP formation. It consists of a core antenna complex that captures photons, and an electron transfer chain that converts photonic excitation into a charge separation.</text>
</comment>
<comment type="subunit">
    <text evidence="1">PSII is composed of 1 copy each of membrane proteins PsbA, PsbB, PsbC, PsbD, PsbE, PsbF, PsbH, PsbI, PsbJ, PsbK, PsbL, PsbM, PsbT, PsbX, PsbY, PsbZ, Psb30/Ycf12, at least 3 peripheral proteins of the oxygen-evolving complex and a large number of cofactors. It forms dimeric complexes.</text>
</comment>
<comment type="subcellular location">
    <subcellularLocation>
        <location evidence="1">Plastid</location>
        <location evidence="1">Chloroplast thylakoid membrane</location>
        <topology evidence="1">Single-pass membrane protein</topology>
    </subcellularLocation>
</comment>
<comment type="similarity">
    <text evidence="1">Belongs to the PsbI family.</text>
</comment>
<feature type="chain" id="PRO_0000298316" description="Photosystem II reaction center protein I">
    <location>
        <begin position="1"/>
        <end position="36"/>
    </location>
</feature>
<feature type="transmembrane region" description="Helical" evidence="1">
    <location>
        <begin position="4"/>
        <end position="24"/>
    </location>
</feature>
<organism>
    <name type="scientific">Capsella bursa-pastoris</name>
    <name type="common">Shepherd's purse</name>
    <name type="synonym">Thlaspi bursa-pastoris</name>
    <dbReference type="NCBI Taxonomy" id="3719"/>
    <lineage>
        <taxon>Eukaryota</taxon>
        <taxon>Viridiplantae</taxon>
        <taxon>Streptophyta</taxon>
        <taxon>Embryophyta</taxon>
        <taxon>Tracheophyta</taxon>
        <taxon>Spermatophyta</taxon>
        <taxon>Magnoliopsida</taxon>
        <taxon>eudicotyledons</taxon>
        <taxon>Gunneridae</taxon>
        <taxon>Pentapetalae</taxon>
        <taxon>rosids</taxon>
        <taxon>malvids</taxon>
        <taxon>Brassicales</taxon>
        <taxon>Brassicaceae</taxon>
        <taxon>Camelineae</taxon>
        <taxon>Capsella</taxon>
    </lineage>
</organism>
<gene>
    <name evidence="1" type="primary">psbI</name>
</gene>
<keyword id="KW-0150">Chloroplast</keyword>
<keyword id="KW-0472">Membrane</keyword>
<keyword id="KW-0602">Photosynthesis</keyword>
<keyword id="KW-0604">Photosystem II</keyword>
<keyword id="KW-0934">Plastid</keyword>
<keyword id="KW-0674">Reaction center</keyword>
<keyword id="KW-0793">Thylakoid</keyword>
<keyword id="KW-0812">Transmembrane</keyword>
<keyword id="KW-1133">Transmembrane helix</keyword>
<dbReference type="EMBL" id="AP009371">
    <property type="protein sequence ID" value="BAF50181.1"/>
    <property type="molecule type" value="Genomic_DNA"/>
</dbReference>
<dbReference type="RefSeq" id="YP_001123357.1">
    <property type="nucleotide sequence ID" value="NC_009270.1"/>
</dbReference>
<dbReference type="SMR" id="A4QKH6"/>
<dbReference type="GeneID" id="4961720"/>
<dbReference type="GO" id="GO:0009535">
    <property type="term" value="C:chloroplast thylakoid membrane"/>
    <property type="evidence" value="ECO:0007669"/>
    <property type="project" value="UniProtKB-SubCell"/>
</dbReference>
<dbReference type="GO" id="GO:0009539">
    <property type="term" value="C:photosystem II reaction center"/>
    <property type="evidence" value="ECO:0007669"/>
    <property type="project" value="InterPro"/>
</dbReference>
<dbReference type="GO" id="GO:0015979">
    <property type="term" value="P:photosynthesis"/>
    <property type="evidence" value="ECO:0007669"/>
    <property type="project" value="UniProtKB-UniRule"/>
</dbReference>
<dbReference type="HAMAP" id="MF_01316">
    <property type="entry name" value="PSII_PsbI"/>
    <property type="match status" value="1"/>
</dbReference>
<dbReference type="InterPro" id="IPR003686">
    <property type="entry name" value="PSII_PsbI"/>
</dbReference>
<dbReference type="InterPro" id="IPR037271">
    <property type="entry name" value="PSII_PsbI_sf"/>
</dbReference>
<dbReference type="NCBIfam" id="NF002735">
    <property type="entry name" value="PRK02655.1"/>
    <property type="match status" value="1"/>
</dbReference>
<dbReference type="PANTHER" id="PTHR35772">
    <property type="entry name" value="PHOTOSYSTEM II REACTION CENTER PROTEIN I"/>
    <property type="match status" value="1"/>
</dbReference>
<dbReference type="PANTHER" id="PTHR35772:SF1">
    <property type="entry name" value="PHOTOSYSTEM II REACTION CENTER PROTEIN I"/>
    <property type="match status" value="1"/>
</dbReference>
<dbReference type="Pfam" id="PF02532">
    <property type="entry name" value="PsbI"/>
    <property type="match status" value="1"/>
</dbReference>
<dbReference type="SUPFAM" id="SSF161041">
    <property type="entry name" value="Photosystem II reaction center protein I, PsbI"/>
    <property type="match status" value="1"/>
</dbReference>
<reference key="1">
    <citation type="submission" date="2007-03" db="EMBL/GenBank/DDBJ databases">
        <title>Sequencing analysis of Capsella bursa-pastoris JO22 chloroplast DNA.</title>
        <authorList>
            <person name="Hosouchi T."/>
            <person name="Tsuruoka H."/>
            <person name="Kotani H."/>
        </authorList>
    </citation>
    <scope>NUCLEOTIDE SEQUENCE [LARGE SCALE GENOMIC DNA]</scope>
</reference>
<evidence type="ECO:0000255" key="1">
    <source>
        <dbReference type="HAMAP-Rule" id="MF_01316"/>
    </source>
</evidence>